<dbReference type="EMBL" id="AY509253">
    <property type="protein sequence ID" value="AAS00961.1"/>
    <property type="molecule type" value="Genomic_DNA"/>
</dbReference>
<dbReference type="RefSeq" id="YP_024614.1">
    <property type="nucleotide sequence ID" value="NC_005881.2"/>
</dbReference>
<dbReference type="SMR" id="Q6R7F4"/>
<dbReference type="KEGG" id="vg:2948264"/>
<dbReference type="Proteomes" id="UP000007021">
    <property type="component" value="Segment"/>
</dbReference>
<dbReference type="Gene3D" id="2.70.40.10">
    <property type="match status" value="1"/>
</dbReference>
<dbReference type="InterPro" id="IPR029054">
    <property type="entry name" value="dUTPase-like"/>
</dbReference>
<dbReference type="InterPro" id="IPR036157">
    <property type="entry name" value="dUTPase-like_sf"/>
</dbReference>
<dbReference type="Pfam" id="PF00692">
    <property type="entry name" value="dUTPase"/>
    <property type="match status" value="1"/>
</dbReference>
<dbReference type="SUPFAM" id="SSF51283">
    <property type="entry name" value="dUTPase-like"/>
    <property type="match status" value="1"/>
</dbReference>
<keyword id="KW-1185">Reference proteome</keyword>
<proteinExistence type="predicted"/>
<reference key="1">
    <citation type="journal article" date="2005" name="J. Gen. Virol.">
        <title>A novel class of herpesvirus with bivalve hosts.</title>
        <authorList>
            <person name="Davison A.J."/>
            <person name="Trus B.L."/>
            <person name="Cheng N."/>
            <person name="Steven A.C."/>
            <person name="Watson M.S."/>
            <person name="Cunningham C."/>
            <person name="Le Deuff R.M."/>
            <person name="Renault T."/>
        </authorList>
    </citation>
    <scope>NUCLEOTIDE SEQUENCE [LARGE SCALE GENOMIC DNA]</scope>
</reference>
<gene>
    <name type="ORF">ORF75</name>
</gene>
<sequence>MSFIVEKINCNSLPLKRKTRFAAGHDVYTPYDVVFEVGQTEAKVYTNLVVKSVPEGCAIIVAGRSGLMHGNGMRAIDDEITVGSEDELIITLTRKTGLDKRVVLKSETRVAQIIADTTQDVKLVELPISTYGLDVNHGDVPVYKFNTHWRLEAMPWLRDYQGNRNEVYLRLKSEHFNGIIDPDYKGDIIYMSETPFERLDELYVEVRQFSGETYLGGESPDNVVRGEGGFGSTGGH</sequence>
<organism>
    <name type="scientific">Ostreid herpesvirus 1 (isolate France)</name>
    <name type="common">OsHV-1</name>
    <name type="synonym">Pacific oyster herpesvirus</name>
    <dbReference type="NCBI Taxonomy" id="654903"/>
    <lineage>
        <taxon>Viruses</taxon>
        <taxon>Duplodnaviria</taxon>
        <taxon>Heunggongvirae</taxon>
        <taxon>Peploviricota</taxon>
        <taxon>Herviviricetes</taxon>
        <taxon>Herpesvirales</taxon>
        <taxon>Malacoherpesviridae</taxon>
        <taxon>Ostreavirus</taxon>
        <taxon>Ostreavirus ostreidmalaco1</taxon>
        <taxon>Ostreid herpesvirus 1</taxon>
    </lineage>
</organism>
<organismHost>
    <name type="scientific">Magallana gigas</name>
    <name type="common">Pacific oyster</name>
    <name type="synonym">Crassostrea gigas</name>
    <dbReference type="NCBI Taxonomy" id="29159"/>
</organismHost>
<organismHost>
    <name type="scientific">Pecten maximus</name>
    <name type="common">King scallop</name>
    <name type="synonym">Pilgrim's clam</name>
    <dbReference type="NCBI Taxonomy" id="6579"/>
</organismHost>
<evidence type="ECO:0000256" key="1">
    <source>
        <dbReference type="SAM" id="MobiDB-lite"/>
    </source>
</evidence>
<feature type="chain" id="PRO_0000385096" description="Uncharacterized protein ORF75">
    <location>
        <begin position="1"/>
        <end position="236"/>
    </location>
</feature>
<feature type="region of interest" description="Disordered" evidence="1">
    <location>
        <begin position="217"/>
        <end position="236"/>
    </location>
</feature>
<feature type="compositionally biased region" description="Gly residues" evidence="1">
    <location>
        <begin position="226"/>
        <end position="236"/>
    </location>
</feature>
<accession>Q6R7F4</accession>
<name>Y075_OSHVF</name>
<protein>
    <recommendedName>
        <fullName>Uncharacterized protein ORF75</fullName>
    </recommendedName>
</protein>